<gene>
    <name evidence="1" type="primary">gatC</name>
    <name type="ordered locus">SPT_0475</name>
</gene>
<name>GATC_STRZT</name>
<sequence length="100" mass="11055">MKITQEEVTHVANLSKLRFSEEETAAFATTLSKIVDMVELLGEVDTTGVAPTTTMADRKTVLRPDVAEEGIDRDRLFKNVPEKDNYYIKVPAILDNGGDA</sequence>
<protein>
    <recommendedName>
        <fullName evidence="1">Aspartyl/glutamyl-tRNA(Asn/Gln) amidotransferase subunit C</fullName>
        <shortName evidence="1">Asp/Glu-ADT subunit C</shortName>
        <ecNumber evidence="1">6.3.5.-</ecNumber>
    </recommendedName>
</protein>
<organism>
    <name type="scientific">Streptococcus pneumoniae (strain Taiwan19F-14)</name>
    <dbReference type="NCBI Taxonomy" id="487213"/>
    <lineage>
        <taxon>Bacteria</taxon>
        <taxon>Bacillati</taxon>
        <taxon>Bacillota</taxon>
        <taxon>Bacilli</taxon>
        <taxon>Lactobacillales</taxon>
        <taxon>Streptococcaceae</taxon>
        <taxon>Streptococcus</taxon>
    </lineage>
</organism>
<reference key="1">
    <citation type="journal article" date="2010" name="Genome Biol.">
        <title>Structure and dynamics of the pan-genome of Streptococcus pneumoniae and closely related species.</title>
        <authorList>
            <person name="Donati C."/>
            <person name="Hiller N.L."/>
            <person name="Tettelin H."/>
            <person name="Muzzi A."/>
            <person name="Croucher N.J."/>
            <person name="Angiuoli S.V."/>
            <person name="Oggioni M."/>
            <person name="Dunning Hotopp J.C."/>
            <person name="Hu F.Z."/>
            <person name="Riley D.R."/>
            <person name="Covacci A."/>
            <person name="Mitchell T.J."/>
            <person name="Bentley S.D."/>
            <person name="Kilian M."/>
            <person name="Ehrlich G.D."/>
            <person name="Rappuoli R."/>
            <person name="Moxon E.R."/>
            <person name="Masignani V."/>
        </authorList>
    </citation>
    <scope>NUCLEOTIDE SEQUENCE [LARGE SCALE GENOMIC DNA]</scope>
    <source>
        <strain>Taiwan19F-14</strain>
    </source>
</reference>
<comment type="function">
    <text evidence="1">Allows the formation of correctly charged Asn-tRNA(Asn) or Gln-tRNA(Gln) through the transamidation of misacylated Asp-tRNA(Asn) or Glu-tRNA(Gln) in organisms which lack either or both of asparaginyl-tRNA or glutaminyl-tRNA synthetases. The reaction takes place in the presence of glutamine and ATP through an activated phospho-Asp-tRNA(Asn) or phospho-Glu-tRNA(Gln).</text>
</comment>
<comment type="catalytic activity">
    <reaction evidence="1">
        <text>L-glutamyl-tRNA(Gln) + L-glutamine + ATP + H2O = L-glutaminyl-tRNA(Gln) + L-glutamate + ADP + phosphate + H(+)</text>
        <dbReference type="Rhea" id="RHEA:17521"/>
        <dbReference type="Rhea" id="RHEA-COMP:9681"/>
        <dbReference type="Rhea" id="RHEA-COMP:9684"/>
        <dbReference type="ChEBI" id="CHEBI:15377"/>
        <dbReference type="ChEBI" id="CHEBI:15378"/>
        <dbReference type="ChEBI" id="CHEBI:29985"/>
        <dbReference type="ChEBI" id="CHEBI:30616"/>
        <dbReference type="ChEBI" id="CHEBI:43474"/>
        <dbReference type="ChEBI" id="CHEBI:58359"/>
        <dbReference type="ChEBI" id="CHEBI:78520"/>
        <dbReference type="ChEBI" id="CHEBI:78521"/>
        <dbReference type="ChEBI" id="CHEBI:456216"/>
    </reaction>
</comment>
<comment type="catalytic activity">
    <reaction evidence="1">
        <text>L-aspartyl-tRNA(Asn) + L-glutamine + ATP + H2O = L-asparaginyl-tRNA(Asn) + L-glutamate + ADP + phosphate + 2 H(+)</text>
        <dbReference type="Rhea" id="RHEA:14513"/>
        <dbReference type="Rhea" id="RHEA-COMP:9674"/>
        <dbReference type="Rhea" id="RHEA-COMP:9677"/>
        <dbReference type="ChEBI" id="CHEBI:15377"/>
        <dbReference type="ChEBI" id="CHEBI:15378"/>
        <dbReference type="ChEBI" id="CHEBI:29985"/>
        <dbReference type="ChEBI" id="CHEBI:30616"/>
        <dbReference type="ChEBI" id="CHEBI:43474"/>
        <dbReference type="ChEBI" id="CHEBI:58359"/>
        <dbReference type="ChEBI" id="CHEBI:78515"/>
        <dbReference type="ChEBI" id="CHEBI:78516"/>
        <dbReference type="ChEBI" id="CHEBI:456216"/>
    </reaction>
</comment>
<comment type="subunit">
    <text evidence="1">Heterotrimer of A, B and C subunits.</text>
</comment>
<comment type="similarity">
    <text evidence="1">Belongs to the GatC family.</text>
</comment>
<accession>C1CPU8</accession>
<dbReference type="EC" id="6.3.5.-" evidence="1"/>
<dbReference type="EMBL" id="CP000921">
    <property type="protein sequence ID" value="ACO22860.1"/>
    <property type="molecule type" value="Genomic_DNA"/>
</dbReference>
<dbReference type="RefSeq" id="WP_000705418.1">
    <property type="nucleotide sequence ID" value="NC_012469.1"/>
</dbReference>
<dbReference type="SMR" id="C1CPU8"/>
<dbReference type="KEGG" id="snt:SPT_0475"/>
<dbReference type="HOGENOM" id="CLU_105899_1_2_9"/>
<dbReference type="GO" id="GO:0050566">
    <property type="term" value="F:asparaginyl-tRNA synthase (glutamine-hydrolyzing) activity"/>
    <property type="evidence" value="ECO:0007669"/>
    <property type="project" value="RHEA"/>
</dbReference>
<dbReference type="GO" id="GO:0005524">
    <property type="term" value="F:ATP binding"/>
    <property type="evidence" value="ECO:0007669"/>
    <property type="project" value="UniProtKB-KW"/>
</dbReference>
<dbReference type="GO" id="GO:0050567">
    <property type="term" value="F:glutaminyl-tRNA synthase (glutamine-hydrolyzing) activity"/>
    <property type="evidence" value="ECO:0007669"/>
    <property type="project" value="UniProtKB-UniRule"/>
</dbReference>
<dbReference type="GO" id="GO:0070681">
    <property type="term" value="P:glutaminyl-tRNAGln biosynthesis via transamidation"/>
    <property type="evidence" value="ECO:0007669"/>
    <property type="project" value="TreeGrafter"/>
</dbReference>
<dbReference type="GO" id="GO:0006450">
    <property type="term" value="P:regulation of translational fidelity"/>
    <property type="evidence" value="ECO:0007669"/>
    <property type="project" value="InterPro"/>
</dbReference>
<dbReference type="GO" id="GO:0006412">
    <property type="term" value="P:translation"/>
    <property type="evidence" value="ECO:0007669"/>
    <property type="project" value="UniProtKB-UniRule"/>
</dbReference>
<dbReference type="Gene3D" id="1.10.20.60">
    <property type="entry name" value="Glu-tRNAGln amidotransferase C subunit, N-terminal domain"/>
    <property type="match status" value="1"/>
</dbReference>
<dbReference type="HAMAP" id="MF_00122">
    <property type="entry name" value="GatC"/>
    <property type="match status" value="1"/>
</dbReference>
<dbReference type="InterPro" id="IPR036113">
    <property type="entry name" value="Asp/Glu-ADT_sf_sub_c"/>
</dbReference>
<dbReference type="InterPro" id="IPR003837">
    <property type="entry name" value="GatC"/>
</dbReference>
<dbReference type="NCBIfam" id="TIGR00135">
    <property type="entry name" value="gatC"/>
    <property type="match status" value="1"/>
</dbReference>
<dbReference type="PANTHER" id="PTHR15004">
    <property type="entry name" value="GLUTAMYL-TRNA(GLN) AMIDOTRANSFERASE SUBUNIT C, MITOCHONDRIAL"/>
    <property type="match status" value="1"/>
</dbReference>
<dbReference type="PANTHER" id="PTHR15004:SF0">
    <property type="entry name" value="GLUTAMYL-TRNA(GLN) AMIDOTRANSFERASE SUBUNIT C, MITOCHONDRIAL"/>
    <property type="match status" value="1"/>
</dbReference>
<dbReference type="Pfam" id="PF02686">
    <property type="entry name" value="GatC"/>
    <property type="match status" value="1"/>
</dbReference>
<dbReference type="SUPFAM" id="SSF141000">
    <property type="entry name" value="Glu-tRNAGln amidotransferase C subunit"/>
    <property type="match status" value="1"/>
</dbReference>
<feature type="chain" id="PRO_1000122589" description="Aspartyl/glutamyl-tRNA(Asn/Gln) amidotransferase subunit C">
    <location>
        <begin position="1"/>
        <end position="100"/>
    </location>
</feature>
<proteinExistence type="inferred from homology"/>
<evidence type="ECO:0000255" key="1">
    <source>
        <dbReference type="HAMAP-Rule" id="MF_00122"/>
    </source>
</evidence>
<keyword id="KW-0067">ATP-binding</keyword>
<keyword id="KW-0436">Ligase</keyword>
<keyword id="KW-0547">Nucleotide-binding</keyword>
<keyword id="KW-0648">Protein biosynthesis</keyword>